<proteinExistence type="inferred from homology"/>
<protein>
    <recommendedName>
        <fullName evidence="1">Arabinose import ATP-binding protein AraG</fullName>
        <ecNumber evidence="1">7.5.2.12</ecNumber>
    </recommendedName>
</protein>
<reference key="1">
    <citation type="journal article" date="2001" name="Nature">
        <title>Genome sequence of Yersinia pestis, the causative agent of plague.</title>
        <authorList>
            <person name="Parkhill J."/>
            <person name="Wren B.W."/>
            <person name="Thomson N.R."/>
            <person name="Titball R.W."/>
            <person name="Holden M.T.G."/>
            <person name="Prentice M.B."/>
            <person name="Sebaihia M."/>
            <person name="James K.D."/>
            <person name="Churcher C.M."/>
            <person name="Mungall K.L."/>
            <person name="Baker S."/>
            <person name="Basham D."/>
            <person name="Bentley S.D."/>
            <person name="Brooks K."/>
            <person name="Cerdeno-Tarraga A.-M."/>
            <person name="Chillingworth T."/>
            <person name="Cronin A."/>
            <person name="Davies R.M."/>
            <person name="Davis P."/>
            <person name="Dougan G."/>
            <person name="Feltwell T."/>
            <person name="Hamlin N."/>
            <person name="Holroyd S."/>
            <person name="Jagels K."/>
            <person name="Karlyshev A.V."/>
            <person name="Leather S."/>
            <person name="Moule S."/>
            <person name="Oyston P.C.F."/>
            <person name="Quail M.A."/>
            <person name="Rutherford K.M."/>
            <person name="Simmonds M."/>
            <person name="Skelton J."/>
            <person name="Stevens K."/>
            <person name="Whitehead S."/>
            <person name="Barrell B.G."/>
        </authorList>
    </citation>
    <scope>NUCLEOTIDE SEQUENCE [LARGE SCALE GENOMIC DNA]</scope>
    <source>
        <strain>CO-92 / Biovar Orientalis</strain>
    </source>
</reference>
<reference key="2">
    <citation type="journal article" date="2002" name="J. Bacteriol.">
        <title>Genome sequence of Yersinia pestis KIM.</title>
        <authorList>
            <person name="Deng W."/>
            <person name="Burland V."/>
            <person name="Plunkett G. III"/>
            <person name="Boutin A."/>
            <person name="Mayhew G.F."/>
            <person name="Liss P."/>
            <person name="Perna N.T."/>
            <person name="Rose D.J."/>
            <person name="Mau B."/>
            <person name="Zhou S."/>
            <person name="Schwartz D.C."/>
            <person name="Fetherston J.D."/>
            <person name="Lindler L.E."/>
            <person name="Brubaker R.R."/>
            <person name="Plano G.V."/>
            <person name="Straley S.C."/>
            <person name="McDonough K.A."/>
            <person name="Nilles M.L."/>
            <person name="Matson J.S."/>
            <person name="Blattner F.R."/>
            <person name="Perry R.D."/>
        </authorList>
    </citation>
    <scope>NUCLEOTIDE SEQUENCE [LARGE SCALE GENOMIC DNA]</scope>
    <source>
        <strain>KIM10+ / Biovar Mediaevalis</strain>
    </source>
</reference>
<reference key="3">
    <citation type="journal article" date="2004" name="DNA Res.">
        <title>Complete genome sequence of Yersinia pestis strain 91001, an isolate avirulent to humans.</title>
        <authorList>
            <person name="Song Y."/>
            <person name="Tong Z."/>
            <person name="Wang J."/>
            <person name="Wang L."/>
            <person name="Guo Z."/>
            <person name="Han Y."/>
            <person name="Zhang J."/>
            <person name="Pei D."/>
            <person name="Zhou D."/>
            <person name="Qin H."/>
            <person name="Pang X."/>
            <person name="Han Y."/>
            <person name="Zhai J."/>
            <person name="Li M."/>
            <person name="Cui B."/>
            <person name="Qi Z."/>
            <person name="Jin L."/>
            <person name="Dai R."/>
            <person name="Chen F."/>
            <person name="Li S."/>
            <person name="Ye C."/>
            <person name="Du Z."/>
            <person name="Lin W."/>
            <person name="Wang J."/>
            <person name="Yu J."/>
            <person name="Yang H."/>
            <person name="Wang J."/>
            <person name="Huang P."/>
            <person name="Yang R."/>
        </authorList>
    </citation>
    <scope>NUCLEOTIDE SEQUENCE [LARGE SCALE GENOMIC DNA]</scope>
    <source>
        <strain>91001 / Biovar Mediaevalis</strain>
    </source>
</reference>
<gene>
    <name evidence="1" type="primary">araG</name>
    <name type="ordered locus">YPO2256</name>
    <name type="ordered locus">y2097</name>
    <name type="ordered locus">YP_2052</name>
</gene>
<comment type="function">
    <text evidence="1">Part of the ABC transporter complex AraFGH involved in arabinose import. Responsible for energy coupling to the transport system.</text>
</comment>
<comment type="catalytic activity">
    <reaction evidence="1">
        <text>L-arabinose(out) + ATP + H2O = L-arabinose(in) + ADP + phosphate + H(+)</text>
        <dbReference type="Rhea" id="RHEA:30007"/>
        <dbReference type="ChEBI" id="CHEBI:15377"/>
        <dbReference type="ChEBI" id="CHEBI:15378"/>
        <dbReference type="ChEBI" id="CHEBI:17535"/>
        <dbReference type="ChEBI" id="CHEBI:30616"/>
        <dbReference type="ChEBI" id="CHEBI:43474"/>
        <dbReference type="ChEBI" id="CHEBI:456216"/>
        <dbReference type="EC" id="7.5.2.12"/>
    </reaction>
</comment>
<comment type="subunit">
    <text evidence="1">The complex is composed of two ATP-binding proteins (AraG), two transmembrane proteins (AraH) and a solute-binding protein (AraF).</text>
</comment>
<comment type="subcellular location">
    <subcellularLocation>
        <location evidence="1">Cell inner membrane</location>
        <topology evidence="1">Peripheral membrane protein</topology>
    </subcellularLocation>
</comment>
<comment type="similarity">
    <text evidence="1">Belongs to the ABC transporter superfamily. Arabinose importer (TC 3.A.1.2.2) family.</text>
</comment>
<comment type="sequence caution" evidence="2">
    <conflict type="erroneous initiation">
        <sequence resource="EMBL-CDS" id="AAM85660"/>
    </conflict>
</comment>
<comment type="sequence caution" evidence="2">
    <conflict type="erroneous initiation">
        <sequence resource="EMBL-CDS" id="CAL20883"/>
    </conflict>
</comment>
<feature type="chain" id="PRO_0000270483" description="Arabinose import ATP-binding protein AraG">
    <location>
        <begin position="1"/>
        <end position="523"/>
    </location>
</feature>
<feature type="domain" description="ABC transporter 1" evidence="1">
    <location>
        <begin position="20"/>
        <end position="255"/>
    </location>
</feature>
<feature type="domain" description="ABC transporter 2" evidence="1">
    <location>
        <begin position="268"/>
        <end position="511"/>
    </location>
</feature>
<feature type="binding site" evidence="1">
    <location>
        <begin position="52"/>
        <end position="59"/>
    </location>
    <ligand>
        <name>ATP</name>
        <dbReference type="ChEBI" id="CHEBI:30616"/>
    </ligand>
</feature>
<dbReference type="EC" id="7.5.2.12" evidence="1"/>
<dbReference type="EMBL" id="AL590842">
    <property type="protein sequence ID" value="CAL20883.1"/>
    <property type="status" value="ALT_INIT"/>
    <property type="molecule type" value="Genomic_DNA"/>
</dbReference>
<dbReference type="EMBL" id="AE009952">
    <property type="protein sequence ID" value="AAM85660.1"/>
    <property type="status" value="ALT_INIT"/>
    <property type="molecule type" value="Genomic_DNA"/>
</dbReference>
<dbReference type="EMBL" id="AE017042">
    <property type="protein sequence ID" value="AAS62266.1"/>
    <property type="molecule type" value="Genomic_DNA"/>
</dbReference>
<dbReference type="RefSeq" id="WP_002210588.1">
    <property type="nucleotide sequence ID" value="NZ_WUCM01000001.1"/>
</dbReference>
<dbReference type="SMR" id="Q0WER5"/>
<dbReference type="STRING" id="214092.YPO2256"/>
<dbReference type="PaxDb" id="214092-YPO2256"/>
<dbReference type="EnsemblBacteria" id="AAS62266">
    <property type="protein sequence ID" value="AAS62266"/>
    <property type="gene ID" value="YP_2052"/>
</dbReference>
<dbReference type="GeneID" id="57976414"/>
<dbReference type="KEGG" id="ype:YPO2256"/>
<dbReference type="KEGG" id="ypk:y2097"/>
<dbReference type="KEGG" id="ypm:YP_2052"/>
<dbReference type="eggNOG" id="COG1129">
    <property type="taxonomic scope" value="Bacteria"/>
</dbReference>
<dbReference type="HOGENOM" id="CLU_000604_92_3_6"/>
<dbReference type="OMA" id="NVHLGHE"/>
<dbReference type="OrthoDB" id="9776369at2"/>
<dbReference type="Proteomes" id="UP000000815">
    <property type="component" value="Chromosome"/>
</dbReference>
<dbReference type="Proteomes" id="UP000001019">
    <property type="component" value="Chromosome"/>
</dbReference>
<dbReference type="Proteomes" id="UP000002490">
    <property type="component" value="Chromosome"/>
</dbReference>
<dbReference type="GO" id="GO:0005886">
    <property type="term" value="C:plasma membrane"/>
    <property type="evidence" value="ECO:0007669"/>
    <property type="project" value="UniProtKB-SubCell"/>
</dbReference>
<dbReference type="GO" id="GO:0015612">
    <property type="term" value="F:ABC-type L-arabinose transporter activity"/>
    <property type="evidence" value="ECO:0007669"/>
    <property type="project" value="UniProtKB-EC"/>
</dbReference>
<dbReference type="GO" id="GO:0005524">
    <property type="term" value="F:ATP binding"/>
    <property type="evidence" value="ECO:0007669"/>
    <property type="project" value="UniProtKB-KW"/>
</dbReference>
<dbReference type="GO" id="GO:0016887">
    <property type="term" value="F:ATP hydrolysis activity"/>
    <property type="evidence" value="ECO:0007669"/>
    <property type="project" value="InterPro"/>
</dbReference>
<dbReference type="CDD" id="cd03216">
    <property type="entry name" value="ABC_Carb_Monos_I"/>
    <property type="match status" value="1"/>
</dbReference>
<dbReference type="CDD" id="cd03215">
    <property type="entry name" value="ABC_Carb_Monos_II"/>
    <property type="match status" value="1"/>
</dbReference>
<dbReference type="FunFam" id="3.40.50.300:FF:000126">
    <property type="entry name" value="Galactose/methyl galactoside import ATP-binding protein MglA"/>
    <property type="match status" value="1"/>
</dbReference>
<dbReference type="FunFam" id="3.40.50.300:FF:000127">
    <property type="entry name" value="Ribose import ATP-binding protein RbsA"/>
    <property type="match status" value="1"/>
</dbReference>
<dbReference type="Gene3D" id="3.40.50.300">
    <property type="entry name" value="P-loop containing nucleotide triphosphate hydrolases"/>
    <property type="match status" value="2"/>
</dbReference>
<dbReference type="InterPro" id="IPR003593">
    <property type="entry name" value="AAA+_ATPase"/>
</dbReference>
<dbReference type="InterPro" id="IPR050107">
    <property type="entry name" value="ABC_carbohydrate_import_ATPase"/>
</dbReference>
<dbReference type="InterPro" id="IPR003439">
    <property type="entry name" value="ABC_transporter-like_ATP-bd"/>
</dbReference>
<dbReference type="InterPro" id="IPR017871">
    <property type="entry name" value="ABC_transporter-like_CS"/>
</dbReference>
<dbReference type="InterPro" id="IPR027417">
    <property type="entry name" value="P-loop_NTPase"/>
</dbReference>
<dbReference type="NCBIfam" id="NF008442">
    <property type="entry name" value="PRK11288.1"/>
    <property type="match status" value="1"/>
</dbReference>
<dbReference type="PANTHER" id="PTHR43790:SF6">
    <property type="entry name" value="ARABINOSE IMPORT ATP-BINDING PROTEIN ARAG"/>
    <property type="match status" value="1"/>
</dbReference>
<dbReference type="PANTHER" id="PTHR43790">
    <property type="entry name" value="CARBOHYDRATE TRANSPORT ATP-BINDING PROTEIN MG119-RELATED"/>
    <property type="match status" value="1"/>
</dbReference>
<dbReference type="Pfam" id="PF00005">
    <property type="entry name" value="ABC_tran"/>
    <property type="match status" value="2"/>
</dbReference>
<dbReference type="SMART" id="SM00382">
    <property type="entry name" value="AAA"/>
    <property type="match status" value="2"/>
</dbReference>
<dbReference type="SUPFAM" id="SSF52540">
    <property type="entry name" value="P-loop containing nucleoside triphosphate hydrolases"/>
    <property type="match status" value="2"/>
</dbReference>
<dbReference type="PROSITE" id="PS00211">
    <property type="entry name" value="ABC_TRANSPORTER_1"/>
    <property type="match status" value="1"/>
</dbReference>
<dbReference type="PROSITE" id="PS50893">
    <property type="entry name" value="ABC_TRANSPORTER_2"/>
    <property type="match status" value="2"/>
</dbReference>
<dbReference type="PROSITE" id="PS51268">
    <property type="entry name" value="ARAG"/>
    <property type="match status" value="1"/>
</dbReference>
<accession>Q0WER5</accession>
<accession>Q74TT5</accession>
<accession>Q8D0I6</accession>
<sequence length="523" mass="56873">MSAPHSALQAELDAAQSPYLAFRGIGKSFPGVLALDDISFTCQAGQIHALMGENGAGKSTLLKILSGNYTPTQGEIHIKGKAVNFTNTTDALDAGVAIIYQELHLVPEMTVAENIYLGQLPTKMGMVDRKLLRYESRIQLSHLGLDIDPDTPLKYLSIGQWQMVEIAKALARNAKIIAFDEPTSSLSAREIEQLFRVIRELRAEGRVILYVSHRMEEIFALSDAITVFKDGRYVRTFDDMTQVNNASLVQAMVGRNLGDIYGYQPREIGSERLTLQAVKAIGVASPISLTVHQGEIVGLFGLVGAGRSELLKGLFGDTKLTSGKLLLDGQPLTIRSPIDAISAGIMLCPEDRKADGIIPVHSVQDNINISARRKTLTAGCLINNRWEADNALLRIQSLNIKTPGPQQLIMNLSGGNQQKAILGRWLSEDMKVILLDEPTRGIDVGAKHEIYNVIYQLAKQGIAVLFASSDLPEVLGLADRIVVMREGAISGELDHEYATEEQALSLAMLRTPNIATNTASAVA</sequence>
<organism>
    <name type="scientific">Yersinia pestis</name>
    <dbReference type="NCBI Taxonomy" id="632"/>
    <lineage>
        <taxon>Bacteria</taxon>
        <taxon>Pseudomonadati</taxon>
        <taxon>Pseudomonadota</taxon>
        <taxon>Gammaproteobacteria</taxon>
        <taxon>Enterobacterales</taxon>
        <taxon>Yersiniaceae</taxon>
        <taxon>Yersinia</taxon>
    </lineage>
</organism>
<name>ARAG_YERPE</name>
<keyword id="KW-0067">ATP-binding</keyword>
<keyword id="KW-0997">Cell inner membrane</keyword>
<keyword id="KW-1003">Cell membrane</keyword>
<keyword id="KW-0472">Membrane</keyword>
<keyword id="KW-0547">Nucleotide-binding</keyword>
<keyword id="KW-1185">Reference proteome</keyword>
<keyword id="KW-0677">Repeat</keyword>
<keyword id="KW-0762">Sugar transport</keyword>
<keyword id="KW-1278">Translocase</keyword>
<keyword id="KW-0813">Transport</keyword>
<evidence type="ECO:0000255" key="1">
    <source>
        <dbReference type="HAMAP-Rule" id="MF_01721"/>
    </source>
</evidence>
<evidence type="ECO:0000305" key="2"/>